<organism>
    <name type="scientific">Clostridioides difficile (strain 630)</name>
    <name type="common">Peptoclostridium difficile</name>
    <dbReference type="NCBI Taxonomy" id="272563"/>
    <lineage>
        <taxon>Bacteria</taxon>
        <taxon>Bacillati</taxon>
        <taxon>Bacillota</taxon>
        <taxon>Clostridia</taxon>
        <taxon>Peptostreptococcales</taxon>
        <taxon>Peptostreptococcaceae</taxon>
        <taxon>Clostridioides</taxon>
    </lineage>
</organism>
<name>Y1071_CLOD6</name>
<comment type="subcellular location">
    <subcellularLocation>
        <location evidence="1">Cytoplasm</location>
    </subcellularLocation>
</comment>
<comment type="similarity">
    <text evidence="1">Belongs to the UPF0291 family.</text>
</comment>
<protein>
    <recommendedName>
        <fullName evidence="1">UPF0291 protein CD630_10710</fullName>
    </recommendedName>
</protein>
<gene>
    <name type="ordered locus">CD630_10710</name>
</gene>
<feature type="chain" id="PRO_1000065023" description="UPF0291 protein CD630_10710">
    <location>
        <begin position="1"/>
        <end position="69"/>
    </location>
</feature>
<reference key="1">
    <citation type="journal article" date="2006" name="Nat. Genet.">
        <title>The multidrug-resistant human pathogen Clostridium difficile has a highly mobile, mosaic genome.</title>
        <authorList>
            <person name="Sebaihia M."/>
            <person name="Wren B.W."/>
            <person name="Mullany P."/>
            <person name="Fairweather N.F."/>
            <person name="Minton N."/>
            <person name="Stabler R."/>
            <person name="Thomson N.R."/>
            <person name="Roberts A.P."/>
            <person name="Cerdeno-Tarraga A.M."/>
            <person name="Wang H."/>
            <person name="Holden M.T.G."/>
            <person name="Wright A."/>
            <person name="Churcher C."/>
            <person name="Quail M.A."/>
            <person name="Baker S."/>
            <person name="Bason N."/>
            <person name="Brooks K."/>
            <person name="Chillingworth T."/>
            <person name="Cronin A."/>
            <person name="Davis P."/>
            <person name="Dowd L."/>
            <person name="Fraser A."/>
            <person name="Feltwell T."/>
            <person name="Hance Z."/>
            <person name="Holroyd S."/>
            <person name="Jagels K."/>
            <person name="Moule S."/>
            <person name="Mungall K."/>
            <person name="Price C."/>
            <person name="Rabbinowitsch E."/>
            <person name="Sharp S."/>
            <person name="Simmonds M."/>
            <person name="Stevens K."/>
            <person name="Unwin L."/>
            <person name="Whithead S."/>
            <person name="Dupuy B."/>
            <person name="Dougan G."/>
            <person name="Barrell B."/>
            <person name="Parkhill J."/>
        </authorList>
    </citation>
    <scope>NUCLEOTIDE SEQUENCE [LARGE SCALE GENOMIC DNA]</scope>
    <source>
        <strain>630</strain>
    </source>
</reference>
<dbReference type="EMBL" id="AM180355">
    <property type="protein sequence ID" value="CAJ67915.1"/>
    <property type="molecule type" value="Genomic_DNA"/>
</dbReference>
<dbReference type="RefSeq" id="WP_003418943.1">
    <property type="nucleotide sequence ID" value="NZ_JAUPES010000006.1"/>
</dbReference>
<dbReference type="RefSeq" id="YP_001087555.1">
    <property type="nucleotide sequence ID" value="NC_009089.1"/>
</dbReference>
<dbReference type="SMR" id="Q18AS6"/>
<dbReference type="STRING" id="272563.CD630_10710"/>
<dbReference type="EnsemblBacteria" id="CAJ67915">
    <property type="protein sequence ID" value="CAJ67915"/>
    <property type="gene ID" value="CD630_10710"/>
</dbReference>
<dbReference type="KEGG" id="cdf:CD630_10710"/>
<dbReference type="KEGG" id="pdc:CDIF630_01215"/>
<dbReference type="PATRIC" id="fig|272563.120.peg.1114"/>
<dbReference type="eggNOG" id="COG4224">
    <property type="taxonomic scope" value="Bacteria"/>
</dbReference>
<dbReference type="OrthoDB" id="390105at2"/>
<dbReference type="PhylomeDB" id="Q18AS6"/>
<dbReference type="BioCyc" id="PDIF272563:G12WB-1194-MONOMER"/>
<dbReference type="Proteomes" id="UP000001978">
    <property type="component" value="Chromosome"/>
</dbReference>
<dbReference type="GO" id="GO:0005737">
    <property type="term" value="C:cytoplasm"/>
    <property type="evidence" value="ECO:0007669"/>
    <property type="project" value="UniProtKB-SubCell"/>
</dbReference>
<dbReference type="Gene3D" id="1.10.287.540">
    <property type="entry name" value="Helix hairpin bin"/>
    <property type="match status" value="1"/>
</dbReference>
<dbReference type="HAMAP" id="MF_01103">
    <property type="entry name" value="UPF0291"/>
    <property type="match status" value="1"/>
</dbReference>
<dbReference type="InterPro" id="IPR009242">
    <property type="entry name" value="DUF896"/>
</dbReference>
<dbReference type="PANTHER" id="PTHR37300:SF2">
    <property type="entry name" value="UPF0291 PROTEIN BC_1827"/>
    <property type="match status" value="1"/>
</dbReference>
<dbReference type="PANTHER" id="PTHR37300">
    <property type="entry name" value="UPF0291 PROTEIN CBO2609/CLC_2481"/>
    <property type="match status" value="1"/>
</dbReference>
<dbReference type="Pfam" id="PF05979">
    <property type="entry name" value="DUF896"/>
    <property type="match status" value="1"/>
</dbReference>
<dbReference type="SUPFAM" id="SSF158221">
    <property type="entry name" value="YnzC-like"/>
    <property type="match status" value="1"/>
</dbReference>
<sequence length="69" mass="8405">MFDKKKLDRINELAKKNKEGILSADEIKEREILRKEYLENFRAHFRSRLDSVKVVSPEEYEQYMKNNKN</sequence>
<keyword id="KW-0963">Cytoplasm</keyword>
<keyword id="KW-1185">Reference proteome</keyword>
<accession>Q18AS6</accession>
<evidence type="ECO:0000255" key="1">
    <source>
        <dbReference type="HAMAP-Rule" id="MF_01103"/>
    </source>
</evidence>
<proteinExistence type="inferred from homology"/>